<keyword id="KW-0030">Aminoacyl-tRNA synthetase</keyword>
<keyword id="KW-0067">ATP-binding</keyword>
<keyword id="KW-0963">Cytoplasm</keyword>
<keyword id="KW-0436">Ligase</keyword>
<keyword id="KW-0547">Nucleotide-binding</keyword>
<keyword id="KW-0648">Protein biosynthesis</keyword>
<comment type="catalytic activity">
    <reaction evidence="1">
        <text>tRNA(Asn) + L-asparagine + ATP = L-asparaginyl-tRNA(Asn) + AMP + diphosphate + H(+)</text>
        <dbReference type="Rhea" id="RHEA:11180"/>
        <dbReference type="Rhea" id="RHEA-COMP:9659"/>
        <dbReference type="Rhea" id="RHEA-COMP:9674"/>
        <dbReference type="ChEBI" id="CHEBI:15378"/>
        <dbReference type="ChEBI" id="CHEBI:30616"/>
        <dbReference type="ChEBI" id="CHEBI:33019"/>
        <dbReference type="ChEBI" id="CHEBI:58048"/>
        <dbReference type="ChEBI" id="CHEBI:78442"/>
        <dbReference type="ChEBI" id="CHEBI:78515"/>
        <dbReference type="ChEBI" id="CHEBI:456215"/>
        <dbReference type="EC" id="6.1.1.22"/>
    </reaction>
</comment>
<comment type="subunit">
    <text evidence="1">Homodimer.</text>
</comment>
<comment type="subcellular location">
    <subcellularLocation>
        <location evidence="1">Cytoplasm</location>
    </subcellularLocation>
</comment>
<comment type="similarity">
    <text evidence="1">Belongs to the class-II aminoacyl-tRNA synthetase family.</text>
</comment>
<proteinExistence type="inferred from homology"/>
<reference key="1">
    <citation type="journal article" date="2006" name="Lancet">
        <title>Complete genome sequence of USA300, an epidemic clone of community-acquired meticillin-resistant Staphylococcus aureus.</title>
        <authorList>
            <person name="Diep B.A."/>
            <person name="Gill S.R."/>
            <person name="Chang R.F."/>
            <person name="Phan T.H."/>
            <person name="Chen J.H."/>
            <person name="Davidson M.G."/>
            <person name="Lin F."/>
            <person name="Lin J."/>
            <person name="Carleton H.A."/>
            <person name="Mongodin E.F."/>
            <person name="Sensabaugh G.F."/>
            <person name="Perdreau-Remington F."/>
        </authorList>
    </citation>
    <scope>NUCLEOTIDE SEQUENCE [LARGE SCALE GENOMIC DNA]</scope>
    <source>
        <strain>USA300</strain>
    </source>
</reference>
<name>SYN_STAA3</name>
<sequence>MKTTIKQAKDHLNQDVTIGAWLTNKRSSGKIAFLQLRDGTGFMQGVVVKSEVDEEVFKLAKEITQESSLYVTGTITEDNRSDLGYEMQVKSIEVISEAHDYPITPKNHGTEFLMDHRHLWLRSKKQHAVMKIRNEVIRATYEFFNKDGFTKVDPPILTASAPEGTSELFHTKYFDQDAFLSQSGQLYLEAAAMAHGKVFSFGPTFRAEKSKTRRHLIEFWMIEGEMAFTNHAESLEIQEQYVTHVVKSVLENCKLELKILERDTSKLEKVATPFPRISYDDAIEFLKAEGFDDIEWGEDFGAPHETAIANHYDLPVFITNYPTKIKPFYMQPNPENEETVLCADLIAPEGYGEIIGGSERVDDLELLEQRVKEHGLDEEAYSYYLDLRRYGSVPHCGFGLGLERTVAWISGVEHVRETAPFPRLLNRLYP</sequence>
<evidence type="ECO:0000255" key="1">
    <source>
        <dbReference type="HAMAP-Rule" id="MF_00534"/>
    </source>
</evidence>
<gene>
    <name evidence="1" type="primary">asnS</name>
    <name type="ordered locus">SAUSA300_1345</name>
</gene>
<feature type="chain" id="PRO_1000051437" description="Asparagine--tRNA ligase">
    <location>
        <begin position="1"/>
        <end position="430"/>
    </location>
</feature>
<accession>Q2FGY6</accession>
<organism>
    <name type="scientific">Staphylococcus aureus (strain USA300)</name>
    <dbReference type="NCBI Taxonomy" id="367830"/>
    <lineage>
        <taxon>Bacteria</taxon>
        <taxon>Bacillati</taxon>
        <taxon>Bacillota</taxon>
        <taxon>Bacilli</taxon>
        <taxon>Bacillales</taxon>
        <taxon>Staphylococcaceae</taxon>
        <taxon>Staphylococcus</taxon>
    </lineage>
</organism>
<protein>
    <recommendedName>
        <fullName evidence="1">Asparagine--tRNA ligase</fullName>
        <ecNumber evidence="1">6.1.1.22</ecNumber>
    </recommendedName>
    <alternativeName>
        <fullName evidence="1">Asparaginyl-tRNA synthetase</fullName>
        <shortName evidence="1">AsnRS</shortName>
    </alternativeName>
</protein>
<dbReference type="EC" id="6.1.1.22" evidence="1"/>
<dbReference type="EMBL" id="CP000255">
    <property type="protein sequence ID" value="ABD22091.1"/>
    <property type="molecule type" value="Genomic_DNA"/>
</dbReference>
<dbReference type="RefSeq" id="WP_000858789.1">
    <property type="nucleotide sequence ID" value="NZ_CP027476.1"/>
</dbReference>
<dbReference type="SMR" id="Q2FGY6"/>
<dbReference type="KEGG" id="saa:SAUSA300_1345"/>
<dbReference type="HOGENOM" id="CLU_004553_2_0_9"/>
<dbReference type="OMA" id="PEMAFYD"/>
<dbReference type="Proteomes" id="UP000001939">
    <property type="component" value="Chromosome"/>
</dbReference>
<dbReference type="GO" id="GO:0005737">
    <property type="term" value="C:cytoplasm"/>
    <property type="evidence" value="ECO:0007669"/>
    <property type="project" value="UniProtKB-SubCell"/>
</dbReference>
<dbReference type="GO" id="GO:0004816">
    <property type="term" value="F:asparagine-tRNA ligase activity"/>
    <property type="evidence" value="ECO:0007669"/>
    <property type="project" value="UniProtKB-UniRule"/>
</dbReference>
<dbReference type="GO" id="GO:0005524">
    <property type="term" value="F:ATP binding"/>
    <property type="evidence" value="ECO:0007669"/>
    <property type="project" value="UniProtKB-UniRule"/>
</dbReference>
<dbReference type="GO" id="GO:0140096">
    <property type="term" value="F:catalytic activity, acting on a protein"/>
    <property type="evidence" value="ECO:0007669"/>
    <property type="project" value="UniProtKB-ARBA"/>
</dbReference>
<dbReference type="GO" id="GO:0003676">
    <property type="term" value="F:nucleic acid binding"/>
    <property type="evidence" value="ECO:0007669"/>
    <property type="project" value="InterPro"/>
</dbReference>
<dbReference type="GO" id="GO:0016740">
    <property type="term" value="F:transferase activity"/>
    <property type="evidence" value="ECO:0007669"/>
    <property type="project" value="UniProtKB-ARBA"/>
</dbReference>
<dbReference type="GO" id="GO:0006421">
    <property type="term" value="P:asparaginyl-tRNA aminoacylation"/>
    <property type="evidence" value="ECO:0007669"/>
    <property type="project" value="UniProtKB-UniRule"/>
</dbReference>
<dbReference type="CDD" id="cd04323">
    <property type="entry name" value="AsnRS_cyto_like_N"/>
    <property type="match status" value="1"/>
</dbReference>
<dbReference type="CDD" id="cd00776">
    <property type="entry name" value="AsxRS_core"/>
    <property type="match status" value="1"/>
</dbReference>
<dbReference type="Gene3D" id="3.30.930.10">
    <property type="entry name" value="Bira Bifunctional Protein, Domain 2"/>
    <property type="match status" value="1"/>
</dbReference>
<dbReference type="Gene3D" id="2.40.50.140">
    <property type="entry name" value="Nucleic acid-binding proteins"/>
    <property type="match status" value="1"/>
</dbReference>
<dbReference type="HAMAP" id="MF_00534">
    <property type="entry name" value="Asn_tRNA_synth"/>
    <property type="match status" value="1"/>
</dbReference>
<dbReference type="InterPro" id="IPR004364">
    <property type="entry name" value="Aa-tRNA-synt_II"/>
</dbReference>
<dbReference type="InterPro" id="IPR006195">
    <property type="entry name" value="aa-tRNA-synth_II"/>
</dbReference>
<dbReference type="InterPro" id="IPR045864">
    <property type="entry name" value="aa-tRNA-synth_II/BPL/LPL"/>
</dbReference>
<dbReference type="InterPro" id="IPR004522">
    <property type="entry name" value="Asn-tRNA-ligase"/>
</dbReference>
<dbReference type="InterPro" id="IPR002312">
    <property type="entry name" value="Asp/Asn-tRNA-synth_IIb"/>
</dbReference>
<dbReference type="InterPro" id="IPR012340">
    <property type="entry name" value="NA-bd_OB-fold"/>
</dbReference>
<dbReference type="InterPro" id="IPR004365">
    <property type="entry name" value="NA-bd_OB_tRNA"/>
</dbReference>
<dbReference type="NCBIfam" id="TIGR00457">
    <property type="entry name" value="asnS"/>
    <property type="match status" value="1"/>
</dbReference>
<dbReference type="NCBIfam" id="NF003037">
    <property type="entry name" value="PRK03932.1"/>
    <property type="match status" value="1"/>
</dbReference>
<dbReference type="NCBIfam" id="NF003483">
    <property type="entry name" value="PRK05159.1"/>
    <property type="match status" value="1"/>
</dbReference>
<dbReference type="PANTHER" id="PTHR22594:SF34">
    <property type="entry name" value="ASPARAGINE--TRNA LIGASE, MITOCHONDRIAL-RELATED"/>
    <property type="match status" value="1"/>
</dbReference>
<dbReference type="PANTHER" id="PTHR22594">
    <property type="entry name" value="ASPARTYL/LYSYL-TRNA SYNTHETASE"/>
    <property type="match status" value="1"/>
</dbReference>
<dbReference type="Pfam" id="PF00152">
    <property type="entry name" value="tRNA-synt_2"/>
    <property type="match status" value="1"/>
</dbReference>
<dbReference type="Pfam" id="PF01336">
    <property type="entry name" value="tRNA_anti-codon"/>
    <property type="match status" value="1"/>
</dbReference>
<dbReference type="PRINTS" id="PR01042">
    <property type="entry name" value="TRNASYNTHASP"/>
</dbReference>
<dbReference type="SUPFAM" id="SSF55681">
    <property type="entry name" value="Class II aaRS and biotin synthetases"/>
    <property type="match status" value="1"/>
</dbReference>
<dbReference type="SUPFAM" id="SSF50249">
    <property type="entry name" value="Nucleic acid-binding proteins"/>
    <property type="match status" value="1"/>
</dbReference>
<dbReference type="PROSITE" id="PS50862">
    <property type="entry name" value="AA_TRNA_LIGASE_II"/>
    <property type="match status" value="1"/>
</dbReference>